<comment type="function">
    <text evidence="1">Catalyzes the formation of 4-diphosphocytidyl-2-C-methyl-D-erythritol from CTP and 2-C-methyl-D-erythritol 4-phosphate (MEP).</text>
</comment>
<comment type="catalytic activity">
    <reaction evidence="1">
        <text>2-C-methyl-D-erythritol 4-phosphate + CTP + H(+) = 4-CDP-2-C-methyl-D-erythritol + diphosphate</text>
        <dbReference type="Rhea" id="RHEA:13429"/>
        <dbReference type="ChEBI" id="CHEBI:15378"/>
        <dbReference type="ChEBI" id="CHEBI:33019"/>
        <dbReference type="ChEBI" id="CHEBI:37563"/>
        <dbReference type="ChEBI" id="CHEBI:57823"/>
        <dbReference type="ChEBI" id="CHEBI:58262"/>
        <dbReference type="EC" id="2.7.7.60"/>
    </reaction>
</comment>
<comment type="pathway">
    <text evidence="1">Isoprenoid biosynthesis; isopentenyl diphosphate biosynthesis via DXP pathway; isopentenyl diphosphate from 1-deoxy-D-xylulose 5-phosphate: step 2/6.</text>
</comment>
<comment type="subunit">
    <text evidence="1">Homodimer.</text>
</comment>
<comment type="similarity">
    <text evidence="1">Belongs to the IspD/TarI cytidylyltransferase family. IspD subfamily.</text>
</comment>
<feature type="chain" id="PRO_1000022925" description="2-C-methyl-D-erythritol 4-phosphate cytidylyltransferase">
    <location>
        <begin position="1"/>
        <end position="236"/>
    </location>
</feature>
<feature type="site" description="Transition state stabilizer" evidence="1">
    <location>
        <position position="20"/>
    </location>
</feature>
<feature type="site" description="Transition state stabilizer" evidence="1">
    <location>
        <position position="27"/>
    </location>
</feature>
<feature type="site" description="Positions MEP for the nucleophilic attack" evidence="1">
    <location>
        <position position="157"/>
    </location>
</feature>
<feature type="site" description="Positions MEP for the nucleophilic attack" evidence="1">
    <location>
        <position position="213"/>
    </location>
</feature>
<proteinExistence type="inferred from homology"/>
<keyword id="KW-0414">Isoprene biosynthesis</keyword>
<keyword id="KW-0548">Nucleotidyltransferase</keyword>
<keyword id="KW-1185">Reference proteome</keyword>
<keyword id="KW-0808">Transferase</keyword>
<organism>
    <name type="scientific">Cronobacter sakazakii (strain ATCC BAA-894)</name>
    <name type="common">Enterobacter sakazakii</name>
    <dbReference type="NCBI Taxonomy" id="290339"/>
    <lineage>
        <taxon>Bacteria</taxon>
        <taxon>Pseudomonadati</taxon>
        <taxon>Pseudomonadota</taxon>
        <taxon>Gammaproteobacteria</taxon>
        <taxon>Enterobacterales</taxon>
        <taxon>Enterobacteriaceae</taxon>
        <taxon>Cronobacter</taxon>
    </lineage>
</organism>
<accession>A7MJ57</accession>
<evidence type="ECO:0000255" key="1">
    <source>
        <dbReference type="HAMAP-Rule" id="MF_00108"/>
    </source>
</evidence>
<gene>
    <name evidence="1" type="primary">ispD</name>
    <name type="ordered locus">ESA_00544</name>
</gene>
<protein>
    <recommendedName>
        <fullName evidence="1">2-C-methyl-D-erythritol 4-phosphate cytidylyltransferase</fullName>
        <ecNumber evidence="1">2.7.7.60</ecNumber>
    </recommendedName>
    <alternativeName>
        <fullName evidence="1">4-diphosphocytidyl-2C-methyl-D-erythritol synthase</fullName>
    </alternativeName>
    <alternativeName>
        <fullName evidence="1">MEP cytidylyltransferase</fullName>
        <shortName evidence="1">MCT</shortName>
    </alternativeName>
</protein>
<reference key="1">
    <citation type="journal article" date="2010" name="PLoS ONE">
        <title>Genome sequence of Cronobacter sakazakii BAA-894 and comparative genomic hybridization analysis with other Cronobacter species.</title>
        <authorList>
            <person name="Kucerova E."/>
            <person name="Clifton S.W."/>
            <person name="Xia X.Q."/>
            <person name="Long F."/>
            <person name="Porwollik S."/>
            <person name="Fulton L."/>
            <person name="Fronick C."/>
            <person name="Minx P."/>
            <person name="Kyung K."/>
            <person name="Warren W."/>
            <person name="Fulton R."/>
            <person name="Feng D."/>
            <person name="Wollam A."/>
            <person name="Shah N."/>
            <person name="Bhonagiri V."/>
            <person name="Nash W.E."/>
            <person name="Hallsworth-Pepin K."/>
            <person name="Wilson R.K."/>
            <person name="McClelland M."/>
            <person name="Forsythe S.J."/>
        </authorList>
    </citation>
    <scope>NUCLEOTIDE SEQUENCE [LARGE SCALE GENOMIC DNA]</scope>
    <source>
        <strain>ATCC BAA-894</strain>
    </source>
</reference>
<sequence length="236" mass="25134">MAPSFADVIAVVPAAGIGSRMQTECPKQYLTIGNQTILEHAVAPLLQHPRISRVIIAISPADTAFARLPLAAHPDIQVVRGGAQRADSVLAGLQAAGDARWALVHDAARPCLSAQDLERLLALTETSQVGGILAAPACDTMKRAEPGKPAIAHTVDRENLWHALTPQLFPLELLRDCLTRALAEGATITDEASALEHCGFHPELVAGRADNIKVTRPEDLALAAFYLTRLTPMETA</sequence>
<name>ISPD_CROS8</name>
<dbReference type="EC" id="2.7.7.60" evidence="1"/>
<dbReference type="EMBL" id="CP000783">
    <property type="protein sequence ID" value="ABU75835.1"/>
    <property type="molecule type" value="Genomic_DNA"/>
</dbReference>
<dbReference type="RefSeq" id="WP_012123931.1">
    <property type="nucleotide sequence ID" value="NC_009778.1"/>
</dbReference>
<dbReference type="SMR" id="A7MJ57"/>
<dbReference type="KEGG" id="esa:ESA_00544"/>
<dbReference type="PATRIC" id="fig|290339.8.peg.488"/>
<dbReference type="HOGENOM" id="CLU_061281_3_1_6"/>
<dbReference type="UniPathway" id="UPA00056">
    <property type="reaction ID" value="UER00093"/>
</dbReference>
<dbReference type="Proteomes" id="UP000000260">
    <property type="component" value="Chromosome"/>
</dbReference>
<dbReference type="GO" id="GO:0050518">
    <property type="term" value="F:2-C-methyl-D-erythritol 4-phosphate cytidylyltransferase activity"/>
    <property type="evidence" value="ECO:0007669"/>
    <property type="project" value="UniProtKB-UniRule"/>
</dbReference>
<dbReference type="GO" id="GO:0019288">
    <property type="term" value="P:isopentenyl diphosphate biosynthetic process, methylerythritol 4-phosphate pathway"/>
    <property type="evidence" value="ECO:0007669"/>
    <property type="project" value="UniProtKB-UniRule"/>
</dbReference>
<dbReference type="CDD" id="cd02516">
    <property type="entry name" value="CDP-ME_synthetase"/>
    <property type="match status" value="1"/>
</dbReference>
<dbReference type="FunFam" id="3.90.550.10:FF:000003">
    <property type="entry name" value="2-C-methyl-D-erythritol 4-phosphate cytidylyltransferase"/>
    <property type="match status" value="1"/>
</dbReference>
<dbReference type="Gene3D" id="3.90.550.10">
    <property type="entry name" value="Spore Coat Polysaccharide Biosynthesis Protein SpsA, Chain A"/>
    <property type="match status" value="1"/>
</dbReference>
<dbReference type="HAMAP" id="MF_00108">
    <property type="entry name" value="IspD"/>
    <property type="match status" value="1"/>
</dbReference>
<dbReference type="InterPro" id="IPR001228">
    <property type="entry name" value="IspD"/>
</dbReference>
<dbReference type="InterPro" id="IPR034683">
    <property type="entry name" value="IspD/TarI"/>
</dbReference>
<dbReference type="InterPro" id="IPR050088">
    <property type="entry name" value="IspD/TarI_cytidylyltransf_bact"/>
</dbReference>
<dbReference type="InterPro" id="IPR029044">
    <property type="entry name" value="Nucleotide-diphossugar_trans"/>
</dbReference>
<dbReference type="NCBIfam" id="TIGR00453">
    <property type="entry name" value="ispD"/>
    <property type="match status" value="1"/>
</dbReference>
<dbReference type="PANTHER" id="PTHR32125">
    <property type="entry name" value="2-C-METHYL-D-ERYTHRITOL 4-PHOSPHATE CYTIDYLYLTRANSFERASE, CHLOROPLASTIC"/>
    <property type="match status" value="1"/>
</dbReference>
<dbReference type="PANTHER" id="PTHR32125:SF4">
    <property type="entry name" value="2-C-METHYL-D-ERYTHRITOL 4-PHOSPHATE CYTIDYLYLTRANSFERASE, CHLOROPLASTIC"/>
    <property type="match status" value="1"/>
</dbReference>
<dbReference type="Pfam" id="PF01128">
    <property type="entry name" value="IspD"/>
    <property type="match status" value="1"/>
</dbReference>
<dbReference type="SUPFAM" id="SSF53448">
    <property type="entry name" value="Nucleotide-diphospho-sugar transferases"/>
    <property type="match status" value="1"/>
</dbReference>